<feature type="chain" id="PRO_0000089478" description="Centromere protein H">
    <location>
        <begin position="1"/>
        <end position="247"/>
    </location>
</feature>
<feature type="region of interest" description="Disordered" evidence="3">
    <location>
        <begin position="1"/>
        <end position="34"/>
    </location>
</feature>
<feature type="coiled-coil region" evidence="2">
    <location>
        <begin position="47"/>
        <end position="192"/>
    </location>
</feature>
<feature type="compositionally biased region" description="Acidic residues" evidence="3">
    <location>
        <begin position="1"/>
        <end position="14"/>
    </location>
</feature>
<feature type="compositionally biased region" description="Low complexity" evidence="3">
    <location>
        <begin position="24"/>
        <end position="34"/>
    </location>
</feature>
<feature type="modified residue" description="N-acetylmethionine" evidence="13 14">
    <location>
        <position position="1"/>
    </location>
</feature>
<feature type="modified residue" description="Phosphoserine" evidence="15">
    <location>
        <position position="16"/>
    </location>
</feature>
<feature type="modified residue" description="Phosphothreonine" evidence="15">
    <location>
        <position position="68"/>
    </location>
</feature>
<feature type="cross-link" description="Glycyl lysine isopeptide (Lys-Gly) (interchain with G-Cter in SUMO2)" evidence="16">
    <location>
        <position position="67"/>
    </location>
</feature>
<feature type="sequence variant" id="VAR_036167" description="In a colorectal cancer sample; somatic mutation; dbSNP:rs777698677." evidence="6">
    <original>E</original>
    <variation>K</variation>
    <location>
        <position position="2"/>
    </location>
</feature>
<feature type="helix" evidence="18">
    <location>
        <begin position="36"/>
        <end position="64"/>
    </location>
</feature>
<feature type="helix" evidence="18">
    <location>
        <begin position="76"/>
        <end position="113"/>
    </location>
</feature>
<feature type="turn" evidence="18">
    <location>
        <begin position="114"/>
        <end position="117"/>
    </location>
</feature>
<feature type="helix" evidence="18">
    <location>
        <begin position="118"/>
        <end position="121"/>
    </location>
</feature>
<feature type="helix" evidence="18">
    <location>
        <begin position="126"/>
        <end position="187"/>
    </location>
</feature>
<feature type="turn" evidence="19">
    <location>
        <begin position="188"/>
        <end position="191"/>
    </location>
</feature>
<feature type="turn" evidence="18">
    <location>
        <begin position="192"/>
        <end position="194"/>
    </location>
</feature>
<feature type="helix" evidence="17">
    <location>
        <begin position="201"/>
        <end position="223"/>
    </location>
</feature>
<feature type="turn" evidence="17">
    <location>
        <begin position="227"/>
        <end position="229"/>
    </location>
</feature>
<feature type="helix" evidence="17">
    <location>
        <begin position="231"/>
        <end position="237"/>
    </location>
</feature>
<feature type="strand" evidence="18">
    <location>
        <begin position="240"/>
        <end position="242"/>
    </location>
</feature>
<name>CENPH_HUMAN</name>
<protein>
    <recommendedName>
        <fullName>Centromere protein H</fullName>
        <shortName>CENP-H</shortName>
    </recommendedName>
    <alternativeName>
        <fullName>Interphase centromere complex protein 35</fullName>
    </alternativeName>
</protein>
<keyword id="KW-0002">3D-structure</keyword>
<keyword id="KW-0007">Acetylation</keyword>
<keyword id="KW-0137">Centromere</keyword>
<keyword id="KW-0158">Chromosome</keyword>
<keyword id="KW-0175">Coiled coil</keyword>
<keyword id="KW-1017">Isopeptide bond</keyword>
<keyword id="KW-0995">Kinetochore</keyword>
<keyword id="KW-0539">Nucleus</keyword>
<keyword id="KW-0597">Phosphoprotein</keyword>
<keyword id="KW-1267">Proteomics identification</keyword>
<keyword id="KW-1185">Reference proteome</keyword>
<keyword id="KW-0832">Ubl conjugation</keyword>
<organism>
    <name type="scientific">Homo sapiens</name>
    <name type="common">Human</name>
    <dbReference type="NCBI Taxonomy" id="9606"/>
    <lineage>
        <taxon>Eukaryota</taxon>
        <taxon>Metazoa</taxon>
        <taxon>Chordata</taxon>
        <taxon>Craniata</taxon>
        <taxon>Vertebrata</taxon>
        <taxon>Euteleostomi</taxon>
        <taxon>Mammalia</taxon>
        <taxon>Eutheria</taxon>
        <taxon>Euarchontoglires</taxon>
        <taxon>Primates</taxon>
        <taxon>Haplorrhini</taxon>
        <taxon>Catarrhini</taxon>
        <taxon>Hominidae</taxon>
        <taxon>Homo</taxon>
    </lineage>
</organism>
<proteinExistence type="evidence at protein level"/>
<accession>Q9H3R5</accession>
<accession>A8K3Y1</accession>
<gene>
    <name evidence="12" type="primary">CENPH</name>
    <name type="synonym">ICEN35</name>
</gene>
<evidence type="ECO:0000250" key="1"/>
<evidence type="ECO:0000255" key="2"/>
<evidence type="ECO:0000256" key="3">
    <source>
        <dbReference type="SAM" id="MobiDB-lite"/>
    </source>
</evidence>
<evidence type="ECO:0000269" key="4">
    <source>
    </source>
</evidence>
<evidence type="ECO:0000269" key="5">
    <source>
    </source>
</evidence>
<evidence type="ECO:0000269" key="6">
    <source>
    </source>
</evidence>
<evidence type="ECO:0000269" key="7">
    <source>
    </source>
</evidence>
<evidence type="ECO:0000305" key="8"/>
<evidence type="ECO:0000312" key="9">
    <source>
        <dbReference type="EMBL" id="AAH12024.1"/>
    </source>
</evidence>
<evidence type="ECO:0000312" key="10">
    <source>
        <dbReference type="EMBL" id="AAH15355.1"/>
    </source>
</evidence>
<evidence type="ECO:0000312" key="11">
    <source>
        <dbReference type="EMBL" id="BAB18635.1"/>
    </source>
</evidence>
<evidence type="ECO:0000312" key="12">
    <source>
        <dbReference type="HGNC" id="HGNC:17268"/>
    </source>
</evidence>
<evidence type="ECO:0007744" key="13">
    <source>
    </source>
</evidence>
<evidence type="ECO:0007744" key="14">
    <source>
    </source>
</evidence>
<evidence type="ECO:0007744" key="15">
    <source>
    </source>
</evidence>
<evidence type="ECO:0007744" key="16">
    <source>
    </source>
</evidence>
<evidence type="ECO:0007829" key="17">
    <source>
        <dbReference type="PDB" id="7PB4"/>
    </source>
</evidence>
<evidence type="ECO:0007829" key="18">
    <source>
        <dbReference type="PDB" id="7R5S"/>
    </source>
</evidence>
<evidence type="ECO:0007829" key="19">
    <source>
        <dbReference type="PDB" id="7XHO"/>
    </source>
</evidence>
<comment type="function">
    <text evidence="4 5 7">Component of the CENPA-NAC (nucleosome-associated) complex, a complex that plays a central role in assembly of kinetochore proteins, mitotic progression and chromosome segregation. The CENPA-NAC complex recruits the CENPA-CAD (nucleosome distal) complex and may be involved in incorporation of newly synthesized CENPA into centromeres. Required for chromosome congression and efficiently align the chromosomes on a metaphase plate.</text>
</comment>
<comment type="subunit">
    <text evidence="1">Self-associates. Component of the CENPA-NAC complex, at least composed of CENPA, CENPC, CENPH, CENPM, CENPN, CENPT and CENPU. The CENPA-NAC complex interacts with the CENPA-CAD complex, composed of CENPI, CENPK, CENPL, CENPO, CENPP, CENPQ, CENPR and CENPS. Interacts directly with CENPK. Interacts with KIF2C and NDC80. Interacts with TRIM36 (By similarity).</text>
</comment>
<comment type="interaction">
    <interactant intactId="EBI-1003700">
        <id>Q9H3R5</id>
    </interactant>
    <interactant intactId="EBI-11096309">
        <id>Q9NYB9-2</id>
        <label>ABI2</label>
    </interactant>
    <organismsDiffer>false</organismsDiffer>
    <experiments>6</experiments>
</comment>
<comment type="interaction">
    <interactant intactId="EBI-1003700">
        <id>Q9H3R5</id>
    </interactant>
    <interactant intactId="EBI-351428">
        <id>P61158</id>
        <label>ACTR3</label>
    </interactant>
    <organismsDiffer>false</organismsDiffer>
    <experiments>3</experiments>
</comment>
<comment type="interaction">
    <interactant intactId="EBI-1003700">
        <id>Q9H3R5</id>
    </interactant>
    <interactant intactId="EBI-747505">
        <id>Q8TAB5</id>
        <label>C1orf216</label>
    </interactant>
    <organismsDiffer>false</organismsDiffer>
    <experiments>3</experiments>
</comment>
<comment type="interaction">
    <interactant intactId="EBI-1003700">
        <id>Q9H3R5</id>
    </interactant>
    <interactant intactId="EBI-13286880">
        <id>Q7Z758</id>
        <label>C8orf58</label>
    </interactant>
    <organismsDiffer>false</organismsDiffer>
    <experiments>3</experiments>
</comment>
<comment type="interaction">
    <interactant intactId="EBI-1003700">
        <id>Q9H3R5</id>
    </interactant>
    <interactant intactId="EBI-10749669">
        <id>Q8IYE0</id>
        <label>CCDC146</label>
    </interactant>
    <organismsDiffer>false</organismsDiffer>
    <experiments>3</experiments>
</comment>
<comment type="interaction">
    <interactant intactId="EBI-1003700">
        <id>Q9H3R5</id>
    </interactant>
    <interactant intactId="EBI-6871750">
        <id>Q9BS16</id>
        <label>CENPK</label>
    </interactant>
    <organismsDiffer>false</organismsDiffer>
    <experiments>10</experiments>
</comment>
<comment type="interaction">
    <interactant intactId="EBI-1003700">
        <id>Q9H3R5</id>
    </interactant>
    <interactant intactId="EBI-25837549">
        <id>P28329-3</id>
        <label>CHAT</label>
    </interactant>
    <organismsDiffer>false</organismsDiffer>
    <experiments>3</experiments>
</comment>
<comment type="interaction">
    <interactant intactId="EBI-1003700">
        <id>Q9H3R5</id>
    </interactant>
    <interactant intactId="EBI-715074">
        <id>Q13561</id>
        <label>DCTN2</label>
    </interactant>
    <organismsDiffer>false</organismsDiffer>
    <experiments>5</experiments>
</comment>
<comment type="interaction">
    <interactant intactId="EBI-1003700">
        <id>Q9H3R5</id>
    </interactant>
    <interactant intactId="EBI-711389">
        <id>P84090</id>
        <label>ERH</label>
    </interactant>
    <organismsDiffer>false</organismsDiffer>
    <experiments>3</experiments>
</comment>
<comment type="interaction">
    <interactant intactId="EBI-1003700">
        <id>Q9H3R5</id>
    </interactant>
    <interactant intactId="EBI-348399">
        <id>P22607</id>
        <label>FGFR3</label>
    </interactant>
    <organismsDiffer>false</organismsDiffer>
    <experiments>3</experiments>
</comment>
<comment type="interaction">
    <interactant intactId="EBI-1003700">
        <id>Q9H3R5</id>
    </interactant>
    <interactant intactId="EBI-6447217">
        <id>O75409</id>
        <label>H2AP</label>
    </interactant>
    <organismsDiffer>false</organismsDiffer>
    <experiments>4</experiments>
</comment>
<comment type="interaction">
    <interactant intactId="EBI-1003700">
        <id>Q9H3R5</id>
    </interactant>
    <interactant intactId="EBI-350145">
        <id>P01112</id>
        <label>HRAS</label>
    </interactant>
    <organismsDiffer>false</organismsDiffer>
    <experiments>3</experiments>
</comment>
<comment type="interaction">
    <interactant intactId="EBI-1003700">
        <id>Q9H3R5</id>
    </interactant>
    <interactant intactId="EBI-968218">
        <id>P20700</id>
        <label>LMNB1</label>
    </interactant>
    <organismsDiffer>false</organismsDiffer>
    <experiments>3</experiments>
</comment>
<comment type="interaction">
    <interactant intactId="EBI-1003700">
        <id>Q9H3R5</id>
    </interactant>
    <interactant intactId="EBI-6165891">
        <id>Q14696</id>
        <label>MESD</label>
    </interactant>
    <organismsDiffer>false</organismsDiffer>
    <experiments>3</experiments>
</comment>
<comment type="interaction">
    <interactant intactId="EBI-1003700">
        <id>Q9H3R5</id>
    </interactant>
    <interactant intactId="EBI-2547776">
        <id>Q13126</id>
        <label>MTAP</label>
    </interactant>
    <organismsDiffer>false</organismsDiffer>
    <experiments>3</experiments>
</comment>
<comment type="interaction">
    <interactant intactId="EBI-1003700">
        <id>Q9H3R5</id>
    </interactant>
    <interactant intactId="EBI-715849">
        <id>O14777</id>
        <label>NDC80</label>
    </interactant>
    <organismsDiffer>false</organismsDiffer>
    <experiments>8</experiments>
</comment>
<comment type="interaction">
    <interactant intactId="EBI-1003700">
        <id>Q9H3R5</id>
    </interactant>
    <interactant intactId="EBI-741048">
        <id>Q7Z3B4</id>
        <label>NUP54</label>
    </interactant>
    <organismsDiffer>false</organismsDiffer>
    <experiments>3</experiments>
</comment>
<comment type="interaction">
    <interactant intactId="EBI-1003700">
        <id>Q9H3R5</id>
    </interactant>
    <interactant intactId="EBI-2933362">
        <id>Q9H2L5</id>
        <label>RASSF4</label>
    </interactant>
    <organismsDiffer>false</organismsDiffer>
    <experiments>3</experiments>
</comment>
<comment type="interaction">
    <interactant intactId="EBI-1003700">
        <id>Q9H3R5</id>
    </interactant>
    <interactant intactId="EBI-413317">
        <id>Q96R06</id>
        <label>SPAG5</label>
    </interactant>
    <organismsDiffer>false</organismsDiffer>
    <experiments>3</experiments>
</comment>
<comment type="interaction">
    <interactant intactId="EBI-1003700">
        <id>Q9H3R5</id>
    </interactant>
    <interactant intactId="EBI-12856290">
        <id>Q6ZR52-3</id>
        <label>ZNF493</label>
    </interactant>
    <organismsDiffer>false</organismsDiffer>
    <experiments>3</experiments>
</comment>
<comment type="interaction">
    <interactant intactId="EBI-1003700">
        <id>Q9H3R5</id>
    </interactant>
    <interactant intactId="EBI-1210440">
        <id>O43309</id>
        <label>ZSCAN12</label>
    </interactant>
    <organismsDiffer>false</organismsDiffer>
    <experiments>3</experiments>
</comment>
<comment type="subcellular location">
    <subcellularLocation>
        <location>Nucleus</location>
    </subcellularLocation>
    <subcellularLocation>
        <location>Chromosome</location>
        <location>Centromere</location>
        <location>Kinetochore</location>
    </subcellularLocation>
    <text>Associates with active centromere-kinetochore complexes throughout the cell cycle. Colocalizes with inner kinetochore plate proteins CENPA and CENPC during both interphase and metaphase.</text>
</comment>
<comment type="similarity">
    <text evidence="2">Belongs to the CENP-H/MCM16 family.</text>
</comment>
<sequence length="247" mass="28481">MEEQPQMQDADEPADSGGEGRAGGPPQVAGAQAACSEDRMTLLLRLRAQTKQQLLEYKSMVDASEEKTPEQIMQEKQIEAKIEDLENEIEEVKVAFEIKKLALDRMRLSTALKKNLEKISRQSSVLMDNMKHLLELNKLIMKSQQESWDLEEKLLDIRKKRLQLKQASESKLLEIQTEKNKQKIDLDSMENSERIKIIRQNLQMEIKITTVIQHVFQNLILGSKVNWAEDPALKEIVLQLEKNVDMM</sequence>
<dbReference type="EMBL" id="AB035124">
    <property type="protein sequence ID" value="BAB18635.1"/>
    <property type="molecule type" value="mRNA"/>
</dbReference>
<dbReference type="EMBL" id="AK290746">
    <property type="protein sequence ID" value="BAF83435.1"/>
    <property type="molecule type" value="mRNA"/>
</dbReference>
<dbReference type="EMBL" id="CH471137">
    <property type="protein sequence ID" value="EAW51304.1"/>
    <property type="molecule type" value="Genomic_DNA"/>
</dbReference>
<dbReference type="EMBL" id="BC015355">
    <property type="protein sequence ID" value="AAH15355.1"/>
    <property type="molecule type" value="mRNA"/>
</dbReference>
<dbReference type="EMBL" id="BC012024">
    <property type="protein sequence ID" value="AAH12024.1"/>
    <property type="molecule type" value="mRNA"/>
</dbReference>
<dbReference type="CCDS" id="CCDS3998.1"/>
<dbReference type="RefSeq" id="NP_075060.1">
    <property type="nucleotide sequence ID" value="NM_022909.4"/>
</dbReference>
<dbReference type="PDB" id="7PB4">
    <property type="method" value="X-ray"/>
    <property type="resolution" value="2.49 A"/>
    <property type="chains" value="H=199-247"/>
</dbReference>
<dbReference type="PDB" id="7PKN">
    <property type="method" value="EM"/>
    <property type="resolution" value="3.20 A"/>
    <property type="chains" value="H=1-247"/>
</dbReference>
<dbReference type="PDB" id="7QOO">
    <property type="method" value="EM"/>
    <property type="resolution" value="4.60 A"/>
    <property type="chains" value="H=1-247"/>
</dbReference>
<dbReference type="PDB" id="7R5S">
    <property type="method" value="EM"/>
    <property type="resolution" value="2.83 A"/>
    <property type="chains" value="H=1-247"/>
</dbReference>
<dbReference type="PDB" id="7R5V">
    <property type="method" value="EM"/>
    <property type="resolution" value="4.55 A"/>
    <property type="chains" value="H=1-247"/>
</dbReference>
<dbReference type="PDB" id="7XHN">
    <property type="method" value="EM"/>
    <property type="resolution" value="3.71 A"/>
    <property type="chains" value="H=1-247"/>
</dbReference>
<dbReference type="PDB" id="7XHO">
    <property type="method" value="EM"/>
    <property type="resolution" value="3.29 A"/>
    <property type="chains" value="H=1-247"/>
</dbReference>
<dbReference type="PDB" id="7YWX">
    <property type="method" value="EM"/>
    <property type="resolution" value="12.00 A"/>
    <property type="chains" value="H=1-247"/>
</dbReference>
<dbReference type="PDB" id="7YYH">
    <property type="method" value="EM"/>
    <property type="resolution" value="8.90 A"/>
    <property type="chains" value="H=1-247"/>
</dbReference>
<dbReference type="PDBsum" id="7PB4"/>
<dbReference type="PDBsum" id="7PKN"/>
<dbReference type="PDBsum" id="7QOO"/>
<dbReference type="PDBsum" id="7R5S"/>
<dbReference type="PDBsum" id="7R5V"/>
<dbReference type="PDBsum" id="7XHN"/>
<dbReference type="PDBsum" id="7XHO"/>
<dbReference type="PDBsum" id="7YWX"/>
<dbReference type="PDBsum" id="7YYH"/>
<dbReference type="EMDB" id="EMD-13473"/>
<dbReference type="EMDB" id="EMD-14098"/>
<dbReference type="EMDB" id="EMD-14336"/>
<dbReference type="EMDB" id="EMD-14341"/>
<dbReference type="EMDB" id="EMD-14351"/>
<dbReference type="EMDB" id="EMD-14375"/>
<dbReference type="EMDB" id="EMD-33196"/>
<dbReference type="EMDB" id="EMD-33197"/>
<dbReference type="SMR" id="Q9H3R5"/>
<dbReference type="BioGRID" id="122355">
    <property type="interactions" value="98"/>
</dbReference>
<dbReference type="ComplexPortal" id="CPX-5646">
    <property type="entry name" value="Kinetochore CCAN complex"/>
</dbReference>
<dbReference type="CORUM" id="Q9H3R5"/>
<dbReference type="FunCoup" id="Q9H3R5">
    <property type="interactions" value="1137"/>
</dbReference>
<dbReference type="IntAct" id="Q9H3R5">
    <property type="interactions" value="84"/>
</dbReference>
<dbReference type="MINT" id="Q9H3R5"/>
<dbReference type="STRING" id="9606.ENSP00000283006"/>
<dbReference type="GlyGen" id="Q9H3R5">
    <property type="glycosylation" value="1 site, 1 O-linked glycan (1 site)"/>
</dbReference>
<dbReference type="iPTMnet" id="Q9H3R5"/>
<dbReference type="PhosphoSitePlus" id="Q9H3R5"/>
<dbReference type="BioMuta" id="CENPH"/>
<dbReference type="DMDM" id="74733576"/>
<dbReference type="jPOST" id="Q9H3R5"/>
<dbReference type="MassIVE" id="Q9H3R5"/>
<dbReference type="PaxDb" id="9606-ENSP00000283006"/>
<dbReference type="PeptideAtlas" id="Q9H3R5"/>
<dbReference type="ProteomicsDB" id="80745"/>
<dbReference type="Pumba" id="Q9H3R5"/>
<dbReference type="Antibodypedia" id="23919">
    <property type="antibodies" value="410 antibodies from 31 providers"/>
</dbReference>
<dbReference type="DNASU" id="64946"/>
<dbReference type="Ensembl" id="ENST00000283006.7">
    <property type="protein sequence ID" value="ENSP00000283006.2"/>
    <property type="gene ID" value="ENSG00000153044.10"/>
</dbReference>
<dbReference type="GeneID" id="64946"/>
<dbReference type="KEGG" id="hsa:64946"/>
<dbReference type="MANE-Select" id="ENST00000283006.7">
    <property type="protein sequence ID" value="ENSP00000283006.2"/>
    <property type="RefSeq nucleotide sequence ID" value="NM_022909.4"/>
    <property type="RefSeq protein sequence ID" value="NP_075060.1"/>
</dbReference>
<dbReference type="UCSC" id="uc003jvp.3">
    <property type="organism name" value="human"/>
</dbReference>
<dbReference type="AGR" id="HGNC:17268"/>
<dbReference type="CTD" id="64946"/>
<dbReference type="DisGeNET" id="64946"/>
<dbReference type="GeneCards" id="CENPH"/>
<dbReference type="HGNC" id="HGNC:17268">
    <property type="gene designation" value="CENPH"/>
</dbReference>
<dbReference type="HPA" id="ENSG00000153044">
    <property type="expression patterns" value="Tissue enhanced (bone marrow, testis)"/>
</dbReference>
<dbReference type="MIM" id="605607">
    <property type="type" value="gene"/>
</dbReference>
<dbReference type="neXtProt" id="NX_Q9H3R5"/>
<dbReference type="OpenTargets" id="ENSG00000153044"/>
<dbReference type="PharmGKB" id="PA26402"/>
<dbReference type="VEuPathDB" id="HostDB:ENSG00000153044"/>
<dbReference type="eggNOG" id="ENOG502S0VG">
    <property type="taxonomic scope" value="Eukaryota"/>
</dbReference>
<dbReference type="GeneTree" id="ENSGT00390000009578"/>
<dbReference type="InParanoid" id="Q9H3R5"/>
<dbReference type="OMA" id="KSHQESW"/>
<dbReference type="OrthoDB" id="2274804at2759"/>
<dbReference type="PAN-GO" id="Q9H3R5">
    <property type="GO annotations" value="5 GO annotations based on evolutionary models"/>
</dbReference>
<dbReference type="PhylomeDB" id="Q9H3R5"/>
<dbReference type="TreeFam" id="TF101134"/>
<dbReference type="PathwayCommons" id="Q9H3R5"/>
<dbReference type="Reactome" id="R-HSA-141444">
    <property type="pathway name" value="Amplification of signal from unattached kinetochores via a MAD2 inhibitory signal"/>
</dbReference>
<dbReference type="Reactome" id="R-HSA-2467813">
    <property type="pathway name" value="Separation of Sister Chromatids"/>
</dbReference>
<dbReference type="Reactome" id="R-HSA-2500257">
    <property type="pathway name" value="Resolution of Sister Chromatid Cohesion"/>
</dbReference>
<dbReference type="Reactome" id="R-HSA-5663220">
    <property type="pathway name" value="RHO GTPases Activate Formins"/>
</dbReference>
<dbReference type="Reactome" id="R-HSA-606279">
    <property type="pathway name" value="Deposition of new CENPA-containing nucleosomes at the centromere"/>
</dbReference>
<dbReference type="Reactome" id="R-HSA-68877">
    <property type="pathway name" value="Mitotic Prometaphase"/>
</dbReference>
<dbReference type="Reactome" id="R-HSA-9648025">
    <property type="pathway name" value="EML4 and NUDC in mitotic spindle formation"/>
</dbReference>
<dbReference type="SignaLink" id="Q9H3R5"/>
<dbReference type="SIGNOR" id="Q9H3R5"/>
<dbReference type="BioGRID-ORCS" id="64946">
    <property type="hits" value="448 hits in 1128 CRISPR screens"/>
</dbReference>
<dbReference type="ChiTaRS" id="CENPH">
    <property type="organism name" value="human"/>
</dbReference>
<dbReference type="GeneWiki" id="CENPH"/>
<dbReference type="GenomeRNAi" id="64946"/>
<dbReference type="Pharos" id="Q9H3R5">
    <property type="development level" value="Tbio"/>
</dbReference>
<dbReference type="PRO" id="PR:Q9H3R5"/>
<dbReference type="Proteomes" id="UP000005640">
    <property type="component" value="Chromosome 5"/>
</dbReference>
<dbReference type="RNAct" id="Q9H3R5">
    <property type="molecule type" value="protein"/>
</dbReference>
<dbReference type="Bgee" id="ENSG00000153044">
    <property type="expression patterns" value="Expressed in primordial germ cell in gonad and 121 other cell types or tissues"/>
</dbReference>
<dbReference type="ExpressionAtlas" id="Q9H3R5">
    <property type="expression patterns" value="baseline and differential"/>
</dbReference>
<dbReference type="GO" id="GO:0005694">
    <property type="term" value="C:chromosome"/>
    <property type="evidence" value="ECO:0000314"/>
    <property type="project" value="HPA"/>
</dbReference>
<dbReference type="GO" id="GO:0005829">
    <property type="term" value="C:cytosol"/>
    <property type="evidence" value="ECO:0000304"/>
    <property type="project" value="Reactome"/>
</dbReference>
<dbReference type="GO" id="GO:0000939">
    <property type="term" value="C:inner kinetochore"/>
    <property type="evidence" value="ECO:0000353"/>
    <property type="project" value="ComplexPortal"/>
</dbReference>
<dbReference type="GO" id="GO:0000776">
    <property type="term" value="C:kinetochore"/>
    <property type="evidence" value="ECO:0000314"/>
    <property type="project" value="MGI"/>
</dbReference>
<dbReference type="GO" id="GO:0005730">
    <property type="term" value="C:nucleolus"/>
    <property type="evidence" value="ECO:0000314"/>
    <property type="project" value="HPA"/>
</dbReference>
<dbReference type="GO" id="GO:0005654">
    <property type="term" value="C:nucleoplasm"/>
    <property type="evidence" value="ECO:0000314"/>
    <property type="project" value="HPA"/>
</dbReference>
<dbReference type="GO" id="GO:0005634">
    <property type="term" value="C:nucleus"/>
    <property type="evidence" value="ECO:0000314"/>
    <property type="project" value="UniProtKB"/>
</dbReference>
<dbReference type="GO" id="GO:0043515">
    <property type="term" value="F:kinetochore binding"/>
    <property type="evidence" value="ECO:0000314"/>
    <property type="project" value="UniProtKB"/>
</dbReference>
<dbReference type="GO" id="GO:0007059">
    <property type="term" value="P:chromosome segregation"/>
    <property type="evidence" value="ECO:0000318"/>
    <property type="project" value="GO_Central"/>
</dbReference>
<dbReference type="GO" id="GO:0051382">
    <property type="term" value="P:kinetochore assembly"/>
    <property type="evidence" value="ECO:0007669"/>
    <property type="project" value="InterPro"/>
</dbReference>
<dbReference type="GO" id="GO:0051383">
    <property type="term" value="P:kinetochore organization"/>
    <property type="evidence" value="ECO:0000304"/>
    <property type="project" value="UniProtKB"/>
</dbReference>
<dbReference type="GO" id="GO:0007052">
    <property type="term" value="P:mitotic spindle organization"/>
    <property type="evidence" value="ECO:0000318"/>
    <property type="project" value="GO_Central"/>
</dbReference>
<dbReference type="InterPro" id="IPR040034">
    <property type="entry name" value="CENP-H"/>
</dbReference>
<dbReference type="InterPro" id="IPR008426">
    <property type="entry name" value="CENP-H_C"/>
</dbReference>
<dbReference type="PANTHER" id="PTHR48122">
    <property type="entry name" value="CENTROMERE PROTEIN H"/>
    <property type="match status" value="1"/>
</dbReference>
<dbReference type="PANTHER" id="PTHR48122:SF1">
    <property type="entry name" value="CENTROMERE PROTEIN H"/>
    <property type="match status" value="1"/>
</dbReference>
<dbReference type="Pfam" id="PF05837">
    <property type="entry name" value="CENP-H"/>
    <property type="match status" value="1"/>
</dbReference>
<reference evidence="8 11" key="1">
    <citation type="journal article" date="2000" name="Hum. Mol. Genet.">
        <title>Human CENP-H multimers colocalize with CENP-A and CENP-C at active centromere-kinetochore complexes.</title>
        <authorList>
            <person name="Sugata N."/>
            <person name="Li S."/>
            <person name="Earnshaw W.C."/>
            <person name="Yen T.J."/>
            <person name="Yoda K."/>
            <person name="Masumoto H."/>
            <person name="Munekata E."/>
            <person name="Warburton P.E."/>
            <person name="Todokoro K."/>
        </authorList>
    </citation>
    <scope>NUCLEOTIDE SEQUENCE [MRNA]</scope>
    <scope>INTERACTION WITH KIF2C</scope>
    <scope>SUBCELLULAR LOCATION</scope>
    <source>
        <tissue>Cervix carcinoma</tissue>
    </source>
</reference>
<reference key="2">
    <citation type="journal article" date="2004" name="Nat. Genet.">
        <title>Complete sequencing and characterization of 21,243 full-length human cDNAs.</title>
        <authorList>
            <person name="Ota T."/>
            <person name="Suzuki Y."/>
            <person name="Nishikawa T."/>
            <person name="Otsuki T."/>
            <person name="Sugiyama T."/>
            <person name="Irie R."/>
            <person name="Wakamatsu A."/>
            <person name="Hayashi K."/>
            <person name="Sato H."/>
            <person name="Nagai K."/>
            <person name="Kimura K."/>
            <person name="Makita H."/>
            <person name="Sekine M."/>
            <person name="Obayashi M."/>
            <person name="Nishi T."/>
            <person name="Shibahara T."/>
            <person name="Tanaka T."/>
            <person name="Ishii S."/>
            <person name="Yamamoto J."/>
            <person name="Saito K."/>
            <person name="Kawai Y."/>
            <person name="Isono Y."/>
            <person name="Nakamura Y."/>
            <person name="Nagahari K."/>
            <person name="Murakami K."/>
            <person name="Yasuda T."/>
            <person name="Iwayanagi T."/>
            <person name="Wagatsuma M."/>
            <person name="Shiratori A."/>
            <person name="Sudo H."/>
            <person name="Hosoiri T."/>
            <person name="Kaku Y."/>
            <person name="Kodaira H."/>
            <person name="Kondo H."/>
            <person name="Sugawara M."/>
            <person name="Takahashi M."/>
            <person name="Kanda K."/>
            <person name="Yokoi T."/>
            <person name="Furuya T."/>
            <person name="Kikkawa E."/>
            <person name="Omura Y."/>
            <person name="Abe K."/>
            <person name="Kamihara K."/>
            <person name="Katsuta N."/>
            <person name="Sato K."/>
            <person name="Tanikawa M."/>
            <person name="Yamazaki M."/>
            <person name="Ninomiya K."/>
            <person name="Ishibashi T."/>
            <person name="Yamashita H."/>
            <person name="Murakawa K."/>
            <person name="Fujimori K."/>
            <person name="Tanai H."/>
            <person name="Kimata M."/>
            <person name="Watanabe M."/>
            <person name="Hiraoka S."/>
            <person name="Chiba Y."/>
            <person name="Ishida S."/>
            <person name="Ono Y."/>
            <person name="Takiguchi S."/>
            <person name="Watanabe S."/>
            <person name="Yosida M."/>
            <person name="Hotuta T."/>
            <person name="Kusano J."/>
            <person name="Kanehori K."/>
            <person name="Takahashi-Fujii A."/>
            <person name="Hara H."/>
            <person name="Tanase T.-O."/>
            <person name="Nomura Y."/>
            <person name="Togiya S."/>
            <person name="Komai F."/>
            <person name="Hara R."/>
            <person name="Takeuchi K."/>
            <person name="Arita M."/>
            <person name="Imose N."/>
            <person name="Musashino K."/>
            <person name="Yuuki H."/>
            <person name="Oshima A."/>
            <person name="Sasaki N."/>
            <person name="Aotsuka S."/>
            <person name="Yoshikawa Y."/>
            <person name="Matsunawa H."/>
            <person name="Ichihara T."/>
            <person name="Shiohata N."/>
            <person name="Sano S."/>
            <person name="Moriya S."/>
            <person name="Momiyama H."/>
            <person name="Satoh N."/>
            <person name="Takami S."/>
            <person name="Terashima Y."/>
            <person name="Suzuki O."/>
            <person name="Nakagawa S."/>
            <person name="Senoh A."/>
            <person name="Mizoguchi H."/>
            <person name="Goto Y."/>
            <person name="Shimizu F."/>
            <person name="Wakebe H."/>
            <person name="Hishigaki H."/>
            <person name="Watanabe T."/>
            <person name="Sugiyama A."/>
            <person name="Takemoto M."/>
            <person name="Kawakami B."/>
            <person name="Yamazaki M."/>
            <person name="Watanabe K."/>
            <person name="Kumagai A."/>
            <person name="Itakura S."/>
            <person name="Fukuzumi Y."/>
            <person name="Fujimori Y."/>
            <person name="Komiyama M."/>
            <person name="Tashiro H."/>
            <person name="Tanigami A."/>
            <person name="Fujiwara T."/>
            <person name="Ono T."/>
            <person name="Yamada K."/>
            <person name="Fujii Y."/>
            <person name="Ozaki K."/>
            <person name="Hirao M."/>
            <person name="Ohmori Y."/>
            <person name="Kawabata A."/>
            <person name="Hikiji T."/>
            <person name="Kobatake N."/>
            <person name="Inagaki H."/>
            <person name="Ikema Y."/>
            <person name="Okamoto S."/>
            <person name="Okitani R."/>
            <person name="Kawakami T."/>
            <person name="Noguchi S."/>
            <person name="Itoh T."/>
            <person name="Shigeta K."/>
            <person name="Senba T."/>
            <person name="Matsumura K."/>
            <person name="Nakajima Y."/>
            <person name="Mizuno T."/>
            <person name="Morinaga M."/>
            <person name="Sasaki M."/>
            <person name="Togashi T."/>
            <person name="Oyama M."/>
            <person name="Hata H."/>
            <person name="Watanabe M."/>
            <person name="Komatsu T."/>
            <person name="Mizushima-Sugano J."/>
            <person name="Satoh T."/>
            <person name="Shirai Y."/>
            <person name="Takahashi Y."/>
            <person name="Nakagawa K."/>
            <person name="Okumura K."/>
            <person name="Nagase T."/>
            <person name="Nomura N."/>
            <person name="Kikuchi H."/>
            <person name="Masuho Y."/>
            <person name="Yamashita R."/>
            <person name="Nakai K."/>
            <person name="Yada T."/>
            <person name="Nakamura Y."/>
            <person name="Ohara O."/>
            <person name="Isogai T."/>
            <person name="Sugano S."/>
        </authorList>
    </citation>
    <scope>NUCLEOTIDE SEQUENCE [LARGE SCALE MRNA]</scope>
</reference>
<reference key="3">
    <citation type="submission" date="2005-09" db="EMBL/GenBank/DDBJ databases">
        <authorList>
            <person name="Mural R.J."/>
            <person name="Istrail S."/>
            <person name="Sutton G.G."/>
            <person name="Florea L."/>
            <person name="Halpern A.L."/>
            <person name="Mobarry C.M."/>
            <person name="Lippert R."/>
            <person name="Walenz B."/>
            <person name="Shatkay H."/>
            <person name="Dew I."/>
            <person name="Miller J.R."/>
            <person name="Flanigan M.J."/>
            <person name="Edwards N.J."/>
            <person name="Bolanos R."/>
            <person name="Fasulo D."/>
            <person name="Halldorsson B.V."/>
            <person name="Hannenhalli S."/>
            <person name="Turner R."/>
            <person name="Yooseph S."/>
            <person name="Lu F."/>
            <person name="Nusskern D.R."/>
            <person name="Shue B.C."/>
            <person name="Zheng X.H."/>
            <person name="Zhong F."/>
            <person name="Delcher A.L."/>
            <person name="Huson D.H."/>
            <person name="Kravitz S.A."/>
            <person name="Mouchard L."/>
            <person name="Reinert K."/>
            <person name="Remington K.A."/>
            <person name="Clark A.G."/>
            <person name="Waterman M.S."/>
            <person name="Eichler E.E."/>
            <person name="Adams M.D."/>
            <person name="Hunkapiller M.W."/>
            <person name="Myers E.W."/>
            <person name="Venter J.C."/>
        </authorList>
    </citation>
    <scope>NUCLEOTIDE SEQUENCE [LARGE SCALE GENOMIC DNA]</scope>
</reference>
<reference evidence="10" key="4">
    <citation type="journal article" date="2004" name="Genome Res.">
        <title>The status, quality, and expansion of the NIH full-length cDNA project: the Mammalian Gene Collection (MGC).</title>
        <authorList>
            <consortium name="The MGC Project Team"/>
        </authorList>
    </citation>
    <scope>NUCLEOTIDE SEQUENCE [LARGE SCALE MRNA]</scope>
    <source>
        <tissue evidence="10">Placenta</tissue>
        <tissue evidence="9">Testis</tissue>
    </source>
</reference>
<reference key="5">
    <citation type="journal article" date="2003" name="Mol. Cell">
        <title>Transcription within a functional human centromere.</title>
        <authorList>
            <person name="Saffery R."/>
            <person name="Sumer H."/>
            <person name="Hassan S."/>
            <person name="Wong L.H."/>
            <person name="Craig J.M."/>
            <person name="Todokoro K."/>
            <person name="Anderson M."/>
            <person name="Stafford A."/>
            <person name="Choo K.H.A."/>
        </authorList>
    </citation>
    <scope>FUNCTION</scope>
</reference>
<reference key="6">
    <citation type="journal article" date="2005" name="Mol. Cell. Biol.">
        <title>The functional region of CENP-H interacts with the Nuf2 complex that localizes to centromere during mitosis.</title>
        <authorList>
            <person name="Mikami Y."/>
            <person name="Hori T."/>
            <person name="Kimura H."/>
            <person name="Fukagawa T."/>
        </authorList>
    </citation>
    <scope>INTERACTION WITH NDC80</scope>
</reference>
<reference key="7">
    <citation type="journal article" date="2006" name="Biochem. Biophys. Res. Commun.">
        <title>RNAi knockdown of human kinetochore protein CENP-H.</title>
        <authorList>
            <person name="Orthaus S."/>
            <person name="Ohndorf S."/>
            <person name="Diekmann S."/>
        </authorList>
    </citation>
    <scope>FUNCTION</scope>
</reference>
<reference key="8">
    <citation type="journal article" date="2006" name="Genes Cells">
        <title>Comprehensive analysis of the ICEN (Interphase Centromere Complex) components enriched in the CENP-A chromatin of human cells.</title>
        <authorList>
            <person name="Izuta H."/>
            <person name="Ikeno M."/>
            <person name="Suzuki N."/>
            <person name="Tomonaga T."/>
            <person name="Nozaki N."/>
            <person name="Obuse C."/>
            <person name="Kisu Y."/>
            <person name="Goshima N."/>
            <person name="Nomura F."/>
            <person name="Nomura N."/>
            <person name="Yoda K."/>
        </authorList>
    </citation>
    <scope>IDENTIFICATION BY MASS SPECTROMETRY</scope>
</reference>
<reference key="9">
    <citation type="journal article" date="2006" name="Nat. Cell Biol.">
        <title>The CENP-H-I complex is required for the efficient incorporation of newly synthesized CENP-A into centromeres.</title>
        <authorList>
            <person name="Okada M."/>
            <person name="Cheeseman I.M."/>
            <person name="Hori T."/>
            <person name="Okawa K."/>
            <person name="McLeod I.X."/>
            <person name="Yates J.R. III"/>
            <person name="Desai A."/>
            <person name="Fukagawa T."/>
        </authorList>
    </citation>
    <scope>IDENTIFICATION IN A COMPLEX WITH CENPI; CENPK; CENPN; CENPO; CENPP; CENPQ; CENPR AND CENPU</scope>
</reference>
<reference key="10">
    <citation type="journal article" date="2006" name="Nat. Cell Biol.">
        <title>The human CENP-A centromeric nucleosome-associated complex.</title>
        <authorList>
            <person name="Foltz D.R."/>
            <person name="Jansen L.E.T."/>
            <person name="Black B.E."/>
            <person name="Bailey A.O."/>
            <person name="Yates J.R. III"/>
            <person name="Cleveland D.W."/>
        </authorList>
    </citation>
    <scope>IDENTIFICATION IN THE CENPA-NAC COMPLEX WITH CENPA; CENPC; CENPM; CENPN; CENPT AND CENPU</scope>
</reference>
<reference key="11">
    <citation type="journal article" date="2007" name="EMBO J.">
        <title>The CENP-A NAC/CAD kinetochore complex controls chromosome congression and spindle bipolarity.</title>
        <authorList>
            <person name="McClelland S.E."/>
            <person name="Borusu S."/>
            <person name="Amaro A.C."/>
            <person name="Winter J.R."/>
            <person name="Belwal M."/>
            <person name="McAinsh A.D."/>
            <person name="Meraldi P."/>
        </authorList>
    </citation>
    <scope>FUNCTION</scope>
    <scope>SUBCELLULAR LOCATION</scope>
</reference>
<reference key="12">
    <citation type="journal article" date="2007" name="Genome Biol.">
        <title>Co-localization of CENP-C and CENP-H to discontinuous domains of CENP-A chromatin at human neocentromeres.</title>
        <authorList>
            <person name="Alonso A."/>
            <person name="Fritz B."/>
            <person name="Hasson D."/>
            <person name="Abrusan G."/>
            <person name="Cheung F."/>
            <person name="Yoda K."/>
            <person name="Radlwimmer B."/>
            <person name="Ladurner A.G."/>
            <person name="Warburton P.E."/>
        </authorList>
    </citation>
    <scope>SUBCELLULAR LOCATION</scope>
</reference>
<reference key="13">
    <citation type="journal article" date="2009" name="Anal. Chem.">
        <title>Lys-N and trypsin cover complementary parts of the phosphoproteome in a refined SCX-based approach.</title>
        <authorList>
            <person name="Gauci S."/>
            <person name="Helbig A.O."/>
            <person name="Slijper M."/>
            <person name="Krijgsveld J."/>
            <person name="Heck A.J."/>
            <person name="Mohammed S."/>
        </authorList>
    </citation>
    <scope>ACETYLATION [LARGE SCALE ANALYSIS] AT MET-1</scope>
    <scope>IDENTIFICATION BY MASS SPECTROMETRY [LARGE SCALE ANALYSIS]</scope>
</reference>
<reference key="14">
    <citation type="journal article" date="2009" name="Sci. China, Ser. C, Life Sci.">
        <title>CENP-K and CENP-H may form coiled-coils in the kinetochores.</title>
        <authorList>
            <person name="Qiu S."/>
            <person name="Wang J."/>
            <person name="Yu C."/>
            <person name="He D."/>
        </authorList>
    </citation>
    <scope>INTERACTION WITH CENPK</scope>
</reference>
<reference key="15">
    <citation type="journal article" date="2012" name="Proc. Natl. Acad. Sci. U.S.A.">
        <title>N-terminal acetylome analyses and functional insights of the N-terminal acetyltransferase NatB.</title>
        <authorList>
            <person name="Van Damme P."/>
            <person name="Lasa M."/>
            <person name="Polevoda B."/>
            <person name="Gazquez C."/>
            <person name="Elosegui-Artola A."/>
            <person name="Kim D.S."/>
            <person name="De Juan-Pardo E."/>
            <person name="Demeyer K."/>
            <person name="Hole K."/>
            <person name="Larrea E."/>
            <person name="Timmerman E."/>
            <person name="Prieto J."/>
            <person name="Arnesen T."/>
            <person name="Sherman F."/>
            <person name="Gevaert K."/>
            <person name="Aldabe R."/>
        </authorList>
    </citation>
    <scope>ACETYLATION [LARGE SCALE ANALYSIS] AT MET-1</scope>
    <scope>IDENTIFICATION BY MASS SPECTROMETRY [LARGE SCALE ANALYSIS]</scope>
</reference>
<reference key="16">
    <citation type="journal article" date="2013" name="J. Proteome Res.">
        <title>Toward a comprehensive characterization of a human cancer cell phosphoproteome.</title>
        <authorList>
            <person name="Zhou H."/>
            <person name="Di Palma S."/>
            <person name="Preisinger C."/>
            <person name="Peng M."/>
            <person name="Polat A.N."/>
            <person name="Heck A.J."/>
            <person name="Mohammed S."/>
        </authorList>
    </citation>
    <scope>PHOSPHORYLATION [LARGE SCALE ANALYSIS] AT SER-16 AND THR-68</scope>
    <scope>IDENTIFICATION BY MASS SPECTROMETRY [LARGE SCALE ANALYSIS]</scope>
    <source>
        <tissue>Cervix carcinoma</tissue>
        <tissue>Erythroleukemia</tissue>
    </source>
</reference>
<reference key="17">
    <citation type="journal article" date="2017" name="Nat. Struct. Mol. Biol.">
        <title>Site-specific mapping of the human SUMO proteome reveals co-modification with phosphorylation.</title>
        <authorList>
            <person name="Hendriks I.A."/>
            <person name="Lyon D."/>
            <person name="Young C."/>
            <person name="Jensen L.J."/>
            <person name="Vertegaal A.C."/>
            <person name="Nielsen M.L."/>
        </authorList>
    </citation>
    <scope>SUMOYLATION [LARGE SCALE ANALYSIS] AT LYS-67</scope>
    <scope>IDENTIFICATION BY MASS SPECTROMETRY [LARGE SCALE ANALYSIS]</scope>
</reference>
<reference key="18">
    <citation type="journal article" date="2006" name="Science">
        <title>The consensus coding sequences of human breast and colorectal cancers.</title>
        <authorList>
            <person name="Sjoeblom T."/>
            <person name="Jones S."/>
            <person name="Wood L.D."/>
            <person name="Parsons D.W."/>
            <person name="Lin J."/>
            <person name="Barber T.D."/>
            <person name="Mandelker D."/>
            <person name="Leary R.J."/>
            <person name="Ptak J."/>
            <person name="Silliman N."/>
            <person name="Szabo S."/>
            <person name="Buckhaults P."/>
            <person name="Farrell C."/>
            <person name="Meeh P."/>
            <person name="Markowitz S.D."/>
            <person name="Willis J."/>
            <person name="Dawson D."/>
            <person name="Willson J.K.V."/>
            <person name="Gazdar A.F."/>
            <person name="Hartigan J."/>
            <person name="Wu L."/>
            <person name="Liu C."/>
            <person name="Parmigiani G."/>
            <person name="Park B.H."/>
            <person name="Bachman K.E."/>
            <person name="Papadopoulos N."/>
            <person name="Vogelstein B."/>
            <person name="Kinzler K.W."/>
            <person name="Velculescu V.E."/>
        </authorList>
    </citation>
    <scope>VARIANT [LARGE SCALE ANALYSIS] LYS-2</scope>
</reference>